<dbReference type="EC" id="1.1.1.330" evidence="4"/>
<dbReference type="EMBL" id="GG704913">
    <property type="protein sequence ID" value="EAS29442.2"/>
    <property type="molecule type" value="Genomic_DNA"/>
</dbReference>
<dbReference type="RefSeq" id="XP_001241025.2">
    <property type="nucleotide sequence ID" value="XM_001241024.2"/>
</dbReference>
<dbReference type="SMR" id="Q1DNC5"/>
<dbReference type="FunCoup" id="Q1DNC5">
    <property type="interactions" value="674"/>
</dbReference>
<dbReference type="STRING" id="246410.Q1DNC5"/>
<dbReference type="GeneID" id="4560718"/>
<dbReference type="KEGG" id="cim:CIMG_08188"/>
<dbReference type="VEuPathDB" id="FungiDB:CIMG_08188"/>
<dbReference type="InParanoid" id="Q1DNC5"/>
<dbReference type="OMA" id="LVAPGMM"/>
<dbReference type="OrthoDB" id="5545019at2759"/>
<dbReference type="UniPathway" id="UPA00094"/>
<dbReference type="Proteomes" id="UP000001261">
    <property type="component" value="Unassembled WGS sequence"/>
</dbReference>
<dbReference type="GO" id="GO:0005789">
    <property type="term" value="C:endoplasmic reticulum membrane"/>
    <property type="evidence" value="ECO:0007669"/>
    <property type="project" value="UniProtKB-SubCell"/>
</dbReference>
<dbReference type="GO" id="GO:0045703">
    <property type="term" value="F:ketoreductase activity"/>
    <property type="evidence" value="ECO:0007669"/>
    <property type="project" value="UniProtKB-UniRule"/>
</dbReference>
<dbReference type="GO" id="GO:0141040">
    <property type="term" value="F:very-long-chain 3-oxoacyl-CoA reductase activity"/>
    <property type="evidence" value="ECO:0007669"/>
    <property type="project" value="UniProtKB-EC"/>
</dbReference>
<dbReference type="GO" id="GO:0030497">
    <property type="term" value="P:fatty acid elongation"/>
    <property type="evidence" value="ECO:0007669"/>
    <property type="project" value="UniProtKB-UniRule"/>
</dbReference>
<dbReference type="GO" id="GO:0044550">
    <property type="term" value="P:secondary metabolite biosynthetic process"/>
    <property type="evidence" value="ECO:0007669"/>
    <property type="project" value="UniProtKB-ARBA"/>
</dbReference>
<dbReference type="CDD" id="cd05356">
    <property type="entry name" value="17beta-HSD1_like_SDR_c"/>
    <property type="match status" value="1"/>
</dbReference>
<dbReference type="FunFam" id="3.40.50.720:FF:000317">
    <property type="entry name" value="Very-long-chain 3-oxoacyl-CoA reductase"/>
    <property type="match status" value="1"/>
</dbReference>
<dbReference type="Gene3D" id="3.40.50.720">
    <property type="entry name" value="NAD(P)-binding Rossmann-like Domain"/>
    <property type="match status" value="1"/>
</dbReference>
<dbReference type="HAMAP" id="MF_03107">
    <property type="entry name" value="3_ketoreductase"/>
    <property type="match status" value="1"/>
</dbReference>
<dbReference type="InterPro" id="IPR027533">
    <property type="entry name" value="3_ketoreductase_fungal"/>
</dbReference>
<dbReference type="InterPro" id="IPR036291">
    <property type="entry name" value="NAD(P)-bd_dom_sf"/>
</dbReference>
<dbReference type="InterPro" id="IPR020904">
    <property type="entry name" value="Sc_DH/Rdtase_CS"/>
</dbReference>
<dbReference type="InterPro" id="IPR002347">
    <property type="entry name" value="SDR_fam"/>
</dbReference>
<dbReference type="PANTHER" id="PTHR43086:SF2">
    <property type="entry name" value="HYDROXYSTEROID DEHYDROGENASE-LIKE PROTEIN 1"/>
    <property type="match status" value="1"/>
</dbReference>
<dbReference type="PANTHER" id="PTHR43086">
    <property type="entry name" value="VERY-LONG-CHAIN 3-OXOOACYL-COA REDUCTASE"/>
    <property type="match status" value="1"/>
</dbReference>
<dbReference type="Pfam" id="PF00106">
    <property type="entry name" value="adh_short"/>
    <property type="match status" value="1"/>
</dbReference>
<dbReference type="PIRSF" id="PIRSF000126">
    <property type="entry name" value="11-beta-HSD1"/>
    <property type="match status" value="1"/>
</dbReference>
<dbReference type="PRINTS" id="PR00081">
    <property type="entry name" value="GDHRDH"/>
</dbReference>
<dbReference type="SUPFAM" id="SSF51735">
    <property type="entry name" value="NAD(P)-binding Rossmann-fold domains"/>
    <property type="match status" value="1"/>
</dbReference>
<dbReference type="PROSITE" id="PS00061">
    <property type="entry name" value="ADH_SHORT"/>
    <property type="match status" value="1"/>
</dbReference>
<reference key="1">
    <citation type="journal article" date="2009" name="Genome Res.">
        <title>Comparative genomic analyses of the human fungal pathogens Coccidioides and their relatives.</title>
        <authorList>
            <person name="Sharpton T.J."/>
            <person name="Stajich J.E."/>
            <person name="Rounsley S.D."/>
            <person name="Gardner M.J."/>
            <person name="Wortman J.R."/>
            <person name="Jordar V.S."/>
            <person name="Maiti R."/>
            <person name="Kodira C.D."/>
            <person name="Neafsey D.E."/>
            <person name="Zeng Q."/>
            <person name="Hung C.-Y."/>
            <person name="McMahan C."/>
            <person name="Muszewska A."/>
            <person name="Grynberg M."/>
            <person name="Mandel M.A."/>
            <person name="Kellner E.M."/>
            <person name="Barker B.M."/>
            <person name="Galgiani J.N."/>
            <person name="Orbach M.J."/>
            <person name="Kirkland T.N."/>
            <person name="Cole G.T."/>
            <person name="Henn M.R."/>
            <person name="Birren B.W."/>
            <person name="Taylor J.W."/>
        </authorList>
    </citation>
    <scope>NUCLEOTIDE SEQUENCE [LARGE SCALE GENOMIC DNA]</scope>
    <source>
        <strain>RS</strain>
    </source>
</reference>
<reference key="2">
    <citation type="journal article" date="2010" name="Genome Res.">
        <title>Population genomic sequencing of Coccidioides fungi reveals recent hybridization and transposon control.</title>
        <authorList>
            <person name="Neafsey D.E."/>
            <person name="Barker B.M."/>
            <person name="Sharpton T.J."/>
            <person name="Stajich J.E."/>
            <person name="Park D.J."/>
            <person name="Whiston E."/>
            <person name="Hung C.-Y."/>
            <person name="McMahan C."/>
            <person name="White J."/>
            <person name="Sykes S."/>
            <person name="Heiman D."/>
            <person name="Young S."/>
            <person name="Zeng Q."/>
            <person name="Abouelleil A."/>
            <person name="Aftuck L."/>
            <person name="Bessette D."/>
            <person name="Brown A."/>
            <person name="FitzGerald M."/>
            <person name="Lui A."/>
            <person name="Macdonald J.P."/>
            <person name="Priest M."/>
            <person name="Orbach M.J."/>
            <person name="Galgiani J.N."/>
            <person name="Kirkland T.N."/>
            <person name="Cole G.T."/>
            <person name="Birren B.W."/>
            <person name="Henn M.R."/>
            <person name="Taylor J.W."/>
            <person name="Rounsley S.D."/>
        </authorList>
    </citation>
    <scope>GENOME REANNOTATION</scope>
    <source>
        <strain>RS</strain>
    </source>
</reference>
<keyword id="KW-0256">Endoplasmic reticulum</keyword>
<keyword id="KW-0275">Fatty acid biosynthesis</keyword>
<keyword id="KW-0276">Fatty acid metabolism</keyword>
<keyword id="KW-0444">Lipid biosynthesis</keyword>
<keyword id="KW-0443">Lipid metabolism</keyword>
<keyword id="KW-0472">Membrane</keyword>
<keyword id="KW-0521">NADP</keyword>
<keyword id="KW-0560">Oxidoreductase</keyword>
<keyword id="KW-1185">Reference proteome</keyword>
<keyword id="KW-0812">Transmembrane</keyword>
<keyword id="KW-1133">Transmembrane helix</keyword>
<gene>
    <name type="ORF">CIMG_08188</name>
</gene>
<evidence type="ECO:0000250" key="1">
    <source>
        <dbReference type="UniProtKB" id="L0E2Z4"/>
    </source>
</evidence>
<evidence type="ECO:0000250" key="2">
    <source>
        <dbReference type="UniProtKB" id="O93868"/>
    </source>
</evidence>
<evidence type="ECO:0000250" key="3">
    <source>
        <dbReference type="UniProtKB" id="P38286"/>
    </source>
</evidence>
<evidence type="ECO:0000255" key="4">
    <source>
        <dbReference type="HAMAP-Rule" id="MF_03107"/>
    </source>
</evidence>
<sequence>MSHISFKGCSFLSHLDSFQFDISSCQTIAASLVFATGGLFLLSRGLSFLRALFSIFILPGKSLSSFGPKGSWALVTGASDGIGKEYALQIARKGYNIILVSRSASKLSAVASEITSANPNILTKTVSMDFSENNDEDYEKLKDIIKDLDISILINNVGLSHSIPVPFVQTPEKEMKDIIAINCLGTLRVTQLVAPGMMQRKRGLILTMGSFGGLLPTPLLATYSGSKAFLQHWSTALASELEPYNIHVQLVVSYLVTSAMSKVRKASMTIPNPKAFVRSTLNHLGRSGGLFSYSHTSVPYWTHGLMAWGITSFLGAMSKTVLGINKSMHESIRQRALRKAARESGKKAQ</sequence>
<proteinExistence type="inferred from homology"/>
<accession>Q1DNC5</accession>
<accession>A0A0D6K9N2</accession>
<accession>J3K5R1</accession>
<protein>
    <recommendedName>
        <fullName evidence="4">Very-long-chain 3-oxoacyl-CoA reductase</fullName>
        <ecNumber evidence="4">1.1.1.330</ecNumber>
    </recommendedName>
    <alternativeName>
        <fullName evidence="4">3-ketoacyl-CoA reductase</fullName>
        <shortName evidence="4">3-ketoreductase</shortName>
        <shortName evidence="4">KAR</shortName>
    </alternativeName>
    <alternativeName>
        <fullName evidence="4">Microsomal beta-keto-reductase</fullName>
    </alternativeName>
</protein>
<comment type="function">
    <text evidence="4">Component of the microsomal membrane bound fatty acid elongation system, which produces the 26-carbon very long-chain fatty acids (VLCFA) from palmitate. Catalyzes the reduction of the 3-ketoacyl-CoA intermediate that is formed in each cycle of fatty acid elongation. VLCFAs serve as precursors for ceramide and sphingolipids.</text>
</comment>
<comment type="catalytic activity">
    <reaction evidence="4">
        <text>a very-long-chain (3R)-3-hydroxyacyl-CoA + NADP(+) = a very-long-chain 3-oxoacyl-CoA + NADPH + H(+)</text>
        <dbReference type="Rhea" id="RHEA:48680"/>
        <dbReference type="ChEBI" id="CHEBI:15378"/>
        <dbReference type="ChEBI" id="CHEBI:57783"/>
        <dbReference type="ChEBI" id="CHEBI:58349"/>
        <dbReference type="ChEBI" id="CHEBI:85440"/>
        <dbReference type="ChEBI" id="CHEBI:90725"/>
        <dbReference type="EC" id="1.1.1.330"/>
    </reaction>
</comment>
<comment type="pathway">
    <text evidence="3">Lipid metabolism; fatty acid biosynthesis.</text>
</comment>
<comment type="subcellular location">
    <subcellularLocation>
        <location evidence="4">Endoplasmic reticulum membrane</location>
        <topology evidence="4">Single-pass membrane protein</topology>
    </subcellularLocation>
</comment>
<comment type="similarity">
    <text evidence="4">Belongs to the short-chain dehydrogenases/reductases (SDR) family.</text>
</comment>
<name>MKAR_COCIM</name>
<organism>
    <name type="scientific">Coccidioides immitis (strain RS)</name>
    <name type="common">Valley fever fungus</name>
    <dbReference type="NCBI Taxonomy" id="246410"/>
    <lineage>
        <taxon>Eukaryota</taxon>
        <taxon>Fungi</taxon>
        <taxon>Dikarya</taxon>
        <taxon>Ascomycota</taxon>
        <taxon>Pezizomycotina</taxon>
        <taxon>Eurotiomycetes</taxon>
        <taxon>Eurotiomycetidae</taxon>
        <taxon>Onygenales</taxon>
        <taxon>Onygenaceae</taxon>
        <taxon>Coccidioides</taxon>
    </lineage>
</organism>
<feature type="chain" id="PRO_0000357305" description="Very-long-chain 3-oxoacyl-CoA reductase">
    <location>
        <begin position="1"/>
        <end position="349"/>
    </location>
</feature>
<feature type="transmembrane region" description="Helical" evidence="4">
    <location>
        <begin position="29"/>
        <end position="49"/>
    </location>
</feature>
<feature type="active site" description="Proton donor" evidence="2">
    <location>
        <position position="223"/>
    </location>
</feature>
<feature type="active site" description="Lowers pKa of active site Tyr" evidence="2">
    <location>
        <position position="227"/>
    </location>
</feature>
<feature type="binding site" evidence="1">
    <location>
        <position position="74"/>
    </location>
    <ligand>
        <name>NADP(+)</name>
        <dbReference type="ChEBI" id="CHEBI:58349"/>
    </ligand>
</feature>
<feature type="binding site" evidence="1">
    <location>
        <position position="129"/>
    </location>
    <ligand>
        <name>NADP(+)</name>
        <dbReference type="ChEBI" id="CHEBI:58349"/>
    </ligand>
</feature>
<feature type="binding site" evidence="1">
    <location>
        <position position="137"/>
    </location>
    <ligand>
        <name>NADP(+)</name>
        <dbReference type="ChEBI" id="CHEBI:58349"/>
    </ligand>
</feature>
<feature type="binding site" evidence="2">
    <location>
        <position position="156"/>
    </location>
    <ligand>
        <name>NADP(+)</name>
        <dbReference type="ChEBI" id="CHEBI:58349"/>
    </ligand>
</feature>
<feature type="binding site" evidence="2">
    <location>
        <position position="223"/>
    </location>
    <ligand>
        <name>NADP(+)</name>
        <dbReference type="ChEBI" id="CHEBI:58349"/>
    </ligand>
</feature>
<feature type="binding site" evidence="2">
    <location>
        <position position="227"/>
    </location>
    <ligand>
        <name>NADP(+)</name>
        <dbReference type="ChEBI" id="CHEBI:58349"/>
    </ligand>
</feature>
<feature type="binding site" evidence="2">
    <location>
        <position position="256"/>
    </location>
    <ligand>
        <name>NADP(+)</name>
        <dbReference type="ChEBI" id="CHEBI:58349"/>
    </ligand>
</feature>
<feature type="binding site" evidence="1">
    <location>
        <position position="258"/>
    </location>
    <ligand>
        <name>NADP(+)</name>
        <dbReference type="ChEBI" id="CHEBI:58349"/>
    </ligand>
</feature>